<protein>
    <recommendedName>
        <fullName evidence="1">3-hydroxyacyl-[acyl-carrier-protein] dehydratase FabZ</fullName>
        <ecNumber evidence="1">4.2.1.59</ecNumber>
    </recommendedName>
    <alternativeName>
        <fullName evidence="1">(3R)-hydroxymyristoyl-[acyl-carrier-protein] dehydratase</fullName>
        <shortName evidence="1">(3R)-hydroxymyristoyl-ACP dehydrase</shortName>
    </alternativeName>
    <alternativeName>
        <fullName evidence="1">Beta-hydroxyacyl-ACP dehydratase</fullName>
    </alternativeName>
</protein>
<reference key="1">
    <citation type="submission" date="2007-08" db="EMBL/GenBank/DDBJ databases">
        <authorList>
            <consortium name="The Vibrio harveyi Genome Sequencing Project"/>
            <person name="Bassler B."/>
            <person name="Clifton S.W."/>
            <person name="Fulton L."/>
            <person name="Delehaunty K."/>
            <person name="Fronick C."/>
            <person name="Harrison M."/>
            <person name="Markivic C."/>
            <person name="Fulton R."/>
            <person name="Tin-Wollam A.-M."/>
            <person name="Shah N."/>
            <person name="Pepin K."/>
            <person name="Nash W."/>
            <person name="Thiruvilangam P."/>
            <person name="Bhonagiri V."/>
            <person name="Waters C."/>
            <person name="Tu K.C."/>
            <person name="Irgon J."/>
            <person name="Wilson R.K."/>
        </authorList>
    </citation>
    <scope>NUCLEOTIDE SEQUENCE [LARGE SCALE GENOMIC DNA]</scope>
    <source>
        <strain>ATCC BAA-1116 / BB120</strain>
    </source>
</reference>
<organism>
    <name type="scientific">Vibrio campbellii (strain ATCC BAA-1116)</name>
    <dbReference type="NCBI Taxonomy" id="2902295"/>
    <lineage>
        <taxon>Bacteria</taxon>
        <taxon>Pseudomonadati</taxon>
        <taxon>Pseudomonadota</taxon>
        <taxon>Gammaproteobacteria</taxon>
        <taxon>Vibrionales</taxon>
        <taxon>Vibrionaceae</taxon>
        <taxon>Vibrio</taxon>
    </lineage>
</organism>
<accession>A7MY04</accession>
<sequence>MTTEKKTMNISEIQELLPHRYPFLLIDRVIDFQEEKYLHAIKNVSVNEPQFTGHFPQLPVFPGVLILEAMAQATGLLAFKSFGAPTENELYYFASVDGAKFRKPVVPGDQMIIEVEFLKERRGIAAFKGVAKVDGEVVCSAELKCARREF</sequence>
<name>FABZ_VIBC1</name>
<comment type="function">
    <text evidence="1">Involved in unsaturated fatty acids biosynthesis. Catalyzes the dehydration of short chain beta-hydroxyacyl-ACPs and long chain saturated and unsaturated beta-hydroxyacyl-ACPs.</text>
</comment>
<comment type="catalytic activity">
    <reaction evidence="1">
        <text>a (3R)-hydroxyacyl-[ACP] = a (2E)-enoyl-[ACP] + H2O</text>
        <dbReference type="Rhea" id="RHEA:13097"/>
        <dbReference type="Rhea" id="RHEA-COMP:9925"/>
        <dbReference type="Rhea" id="RHEA-COMP:9945"/>
        <dbReference type="ChEBI" id="CHEBI:15377"/>
        <dbReference type="ChEBI" id="CHEBI:78784"/>
        <dbReference type="ChEBI" id="CHEBI:78827"/>
        <dbReference type="EC" id="4.2.1.59"/>
    </reaction>
</comment>
<comment type="subcellular location">
    <subcellularLocation>
        <location evidence="1">Cytoplasm</location>
    </subcellularLocation>
</comment>
<comment type="similarity">
    <text evidence="1">Belongs to the thioester dehydratase family. FabZ subfamily.</text>
</comment>
<comment type="sequence caution" evidence="2">
    <conflict type="erroneous initiation">
        <sequence resource="EMBL-CDS" id="ABU72175"/>
    </conflict>
</comment>
<keyword id="KW-0963">Cytoplasm</keyword>
<keyword id="KW-0441">Lipid A biosynthesis</keyword>
<keyword id="KW-0444">Lipid biosynthesis</keyword>
<keyword id="KW-0443">Lipid metabolism</keyword>
<keyword id="KW-0456">Lyase</keyword>
<evidence type="ECO:0000255" key="1">
    <source>
        <dbReference type="HAMAP-Rule" id="MF_00406"/>
    </source>
</evidence>
<evidence type="ECO:0000305" key="2"/>
<gene>
    <name evidence="1" type="primary">fabZ</name>
    <name type="ordered locus">VIBHAR_03226</name>
</gene>
<dbReference type="EC" id="4.2.1.59" evidence="1"/>
<dbReference type="EMBL" id="CP000789">
    <property type="protein sequence ID" value="ABU72175.1"/>
    <property type="status" value="ALT_INIT"/>
    <property type="molecule type" value="Genomic_DNA"/>
</dbReference>
<dbReference type="RefSeq" id="WP_009707417.1">
    <property type="nucleotide sequence ID" value="NC_022269.1"/>
</dbReference>
<dbReference type="SMR" id="A7MY04"/>
<dbReference type="GeneID" id="48230305"/>
<dbReference type="KEGG" id="vha:VIBHAR_03226"/>
<dbReference type="PATRIC" id="fig|338187.25.peg.2964"/>
<dbReference type="Proteomes" id="UP000008152">
    <property type="component" value="Chromosome I"/>
</dbReference>
<dbReference type="GO" id="GO:0005737">
    <property type="term" value="C:cytoplasm"/>
    <property type="evidence" value="ECO:0007669"/>
    <property type="project" value="UniProtKB-SubCell"/>
</dbReference>
<dbReference type="GO" id="GO:0016020">
    <property type="term" value="C:membrane"/>
    <property type="evidence" value="ECO:0007669"/>
    <property type="project" value="GOC"/>
</dbReference>
<dbReference type="GO" id="GO:0019171">
    <property type="term" value="F:(3R)-hydroxyacyl-[acyl-carrier-protein] dehydratase activity"/>
    <property type="evidence" value="ECO:0007669"/>
    <property type="project" value="UniProtKB-EC"/>
</dbReference>
<dbReference type="GO" id="GO:0006633">
    <property type="term" value="P:fatty acid biosynthetic process"/>
    <property type="evidence" value="ECO:0007669"/>
    <property type="project" value="UniProtKB-UniRule"/>
</dbReference>
<dbReference type="GO" id="GO:0009245">
    <property type="term" value="P:lipid A biosynthetic process"/>
    <property type="evidence" value="ECO:0007669"/>
    <property type="project" value="UniProtKB-UniRule"/>
</dbReference>
<dbReference type="CDD" id="cd01288">
    <property type="entry name" value="FabZ"/>
    <property type="match status" value="1"/>
</dbReference>
<dbReference type="FunFam" id="3.10.129.10:FF:000001">
    <property type="entry name" value="3-hydroxyacyl-[acyl-carrier-protein] dehydratase FabZ"/>
    <property type="match status" value="1"/>
</dbReference>
<dbReference type="Gene3D" id="3.10.129.10">
    <property type="entry name" value="Hotdog Thioesterase"/>
    <property type="match status" value="1"/>
</dbReference>
<dbReference type="HAMAP" id="MF_00406">
    <property type="entry name" value="FabZ"/>
    <property type="match status" value="1"/>
</dbReference>
<dbReference type="InterPro" id="IPR013114">
    <property type="entry name" value="FabA_FabZ"/>
</dbReference>
<dbReference type="InterPro" id="IPR010084">
    <property type="entry name" value="FabZ"/>
</dbReference>
<dbReference type="InterPro" id="IPR029069">
    <property type="entry name" value="HotDog_dom_sf"/>
</dbReference>
<dbReference type="NCBIfam" id="TIGR01750">
    <property type="entry name" value="fabZ"/>
    <property type="match status" value="1"/>
</dbReference>
<dbReference type="NCBIfam" id="NF000582">
    <property type="entry name" value="PRK00006.1"/>
    <property type="match status" value="1"/>
</dbReference>
<dbReference type="PANTHER" id="PTHR30272">
    <property type="entry name" value="3-HYDROXYACYL-[ACYL-CARRIER-PROTEIN] DEHYDRATASE"/>
    <property type="match status" value="1"/>
</dbReference>
<dbReference type="PANTHER" id="PTHR30272:SF1">
    <property type="entry name" value="3-HYDROXYACYL-[ACYL-CARRIER-PROTEIN] DEHYDRATASE"/>
    <property type="match status" value="1"/>
</dbReference>
<dbReference type="Pfam" id="PF07977">
    <property type="entry name" value="FabA"/>
    <property type="match status" value="1"/>
</dbReference>
<dbReference type="SUPFAM" id="SSF54637">
    <property type="entry name" value="Thioesterase/thiol ester dehydrase-isomerase"/>
    <property type="match status" value="1"/>
</dbReference>
<proteinExistence type="inferred from homology"/>
<feature type="chain" id="PRO_0000340816" description="3-hydroxyacyl-[acyl-carrier-protein] dehydratase FabZ">
    <location>
        <begin position="1"/>
        <end position="150"/>
    </location>
</feature>
<feature type="active site" evidence="1">
    <location>
        <position position="54"/>
    </location>
</feature>